<keyword id="KW-0002">3D-structure</keyword>
<keyword id="KW-0150">Chloroplast</keyword>
<keyword id="KW-0472">Membrane</keyword>
<keyword id="KW-0520">NAD</keyword>
<keyword id="KW-0521">NADP</keyword>
<keyword id="KW-0934">Plastid</keyword>
<keyword id="KW-0618">Plastoquinone</keyword>
<keyword id="KW-0874">Quinone</keyword>
<keyword id="KW-1185">Reference proteome</keyword>
<keyword id="KW-0793">Thylakoid</keyword>
<keyword id="KW-0809">Transit peptide</keyword>
<keyword id="KW-1278">Translocase</keyword>
<keyword id="KW-0813">Transport</keyword>
<comment type="function">
    <text evidence="8">NDH shuttles electrons from NAD(P)H:plastoquinone, via FMN and iron-sulfur (Fe-S) centers, to quinones in the photosynthetic chain and possibly in a chloroplast respiratory chain. The immediate electron acceptor for the enzyme in this species is believed to be plastoquinone. Couples the redox reaction to proton translocation, and thus conserves the redox energy in a proton gradient.</text>
</comment>
<comment type="catalytic activity">
    <reaction evidence="8">
        <text>a plastoquinone + NADH + (n+1) H(+)(in) = a plastoquinol + NAD(+) + n H(+)(out)</text>
        <dbReference type="Rhea" id="RHEA:42608"/>
        <dbReference type="Rhea" id="RHEA-COMP:9561"/>
        <dbReference type="Rhea" id="RHEA-COMP:9562"/>
        <dbReference type="ChEBI" id="CHEBI:15378"/>
        <dbReference type="ChEBI" id="CHEBI:17757"/>
        <dbReference type="ChEBI" id="CHEBI:57540"/>
        <dbReference type="ChEBI" id="CHEBI:57945"/>
        <dbReference type="ChEBI" id="CHEBI:62192"/>
    </reaction>
</comment>
<comment type="catalytic activity">
    <reaction evidence="8">
        <text>a plastoquinone + NADPH + (n+1) H(+)(in) = a plastoquinol + NADP(+) + n H(+)(out)</text>
        <dbReference type="Rhea" id="RHEA:42612"/>
        <dbReference type="Rhea" id="RHEA-COMP:9561"/>
        <dbReference type="Rhea" id="RHEA-COMP:9562"/>
        <dbReference type="ChEBI" id="CHEBI:15378"/>
        <dbReference type="ChEBI" id="CHEBI:17757"/>
        <dbReference type="ChEBI" id="CHEBI:57783"/>
        <dbReference type="ChEBI" id="CHEBI:58349"/>
        <dbReference type="ChEBI" id="CHEBI:62192"/>
    </reaction>
</comment>
<comment type="subunit">
    <text evidence="4 5">Part of the chloroplast NDH complex, composed of a mixture of chloroplast and nucleus encoded subunits. Component of the NDH subcomplex A, at least composed of ndhH, ndhI, ndhJ, ndhK, ndhL, ndhM, ndhN and ndhO.</text>
</comment>
<comment type="subcellular location">
    <subcellularLocation>
        <location evidence="1">Plastid</location>
        <location evidence="1">Chloroplast thylakoid membrane</location>
        <topology evidence="8">Peripheral membrane protein</topology>
        <orientation evidence="8">Stromal side</orientation>
    </subcellularLocation>
</comment>
<comment type="disruption phenotype">
    <text evidence="4">Malfunction of the NDH complex.</text>
</comment>
<comment type="similarity">
    <text evidence="8">Belongs to the NDH complex subunit M family.</text>
</comment>
<comment type="sequence caution" evidence="8">
    <conflict type="erroneous gene model prediction">
        <sequence resource="EMBL-CDS" id="CAB37532"/>
    </conflict>
    <text>The predicted gene At4g37920 has been split into 2 genes: At4g37920 and At4g37925.</text>
</comment>
<comment type="sequence caution" evidence="8">
    <conflict type="erroneous gene model prediction">
        <sequence resource="EMBL-CDS" id="CAB80457"/>
    </conflict>
    <text>The predicted gene At4g37920 has been split into 2 genes: At4g37920 and At4g37925.</text>
</comment>
<organism>
    <name type="scientific">Arabidopsis thaliana</name>
    <name type="common">Mouse-ear cress</name>
    <dbReference type="NCBI Taxonomy" id="3702"/>
    <lineage>
        <taxon>Eukaryota</taxon>
        <taxon>Viridiplantae</taxon>
        <taxon>Streptophyta</taxon>
        <taxon>Embryophyta</taxon>
        <taxon>Tracheophyta</taxon>
        <taxon>Spermatophyta</taxon>
        <taxon>Magnoliopsida</taxon>
        <taxon>eudicotyledons</taxon>
        <taxon>Gunneridae</taxon>
        <taxon>Pentapetalae</taxon>
        <taxon>rosids</taxon>
        <taxon>malvids</taxon>
        <taxon>Brassicales</taxon>
        <taxon>Brassicaceae</taxon>
        <taxon>Camelineae</taxon>
        <taxon>Arabidopsis</taxon>
    </lineage>
</organism>
<evidence type="ECO:0000250" key="1">
    <source>
        <dbReference type="UniProtKB" id="Q9CAC5"/>
    </source>
</evidence>
<evidence type="ECO:0000255" key="2"/>
<evidence type="ECO:0000256" key="3">
    <source>
        <dbReference type="SAM" id="MobiDB-lite"/>
    </source>
</evidence>
<evidence type="ECO:0000269" key="4">
    <source>
    </source>
</evidence>
<evidence type="ECO:0000269" key="5">
    <source>
    </source>
</evidence>
<evidence type="ECO:0000303" key="6">
    <source>
    </source>
</evidence>
<evidence type="ECO:0000303" key="7">
    <source>
    </source>
</evidence>
<evidence type="ECO:0000305" key="8"/>
<evidence type="ECO:0000312" key="9">
    <source>
        <dbReference type="Araport" id="AT4G37925"/>
    </source>
</evidence>
<evidence type="ECO:0000312" key="10">
    <source>
        <dbReference type="EMBL" id="CAB37532.1"/>
    </source>
</evidence>
<accession>Q2V2S7</accession>
<accession>Q0WUL4</accession>
<accession>Q9SZJ4</accession>
<proteinExistence type="evidence at protein level"/>
<gene>
    <name evidence="7" type="primary">ndhM</name>
    <name evidence="6" type="synonym">NDH-M</name>
    <name evidence="9" type="ordered locus">At4g37925</name>
    <name evidence="10" type="ORF">F20D10.40</name>
</gene>
<sequence length="217" mass="24795">MVAAFSYTACTKLSLLHPSMVAQIRPRTTQKAFVVTNPEQDSTLEVQETETLKEEQSTEKMKKQPTPLRPVEKQLNVKSKGMGDFGGQWLSSVTRHVRIYAAYIDPETCEFDQSQMDKLTLILDPTEEFVWDDESCNKVYSYFQELVDHYEGAPLTEYTLRLIGSDVEHYIRKMLFDGEIQYNMDARVLNFSMGKPRVQFNTSNIEGGGDGQPQEDA</sequence>
<name>NDHM_ARATH</name>
<reference key="1">
    <citation type="journal article" date="1999" name="Nature">
        <title>Sequence and analysis of chromosome 4 of the plant Arabidopsis thaliana.</title>
        <authorList>
            <person name="Mayer K.F.X."/>
            <person name="Schueller C."/>
            <person name="Wambutt R."/>
            <person name="Murphy G."/>
            <person name="Volckaert G."/>
            <person name="Pohl T."/>
            <person name="Duesterhoeft A."/>
            <person name="Stiekema W."/>
            <person name="Entian K.-D."/>
            <person name="Terryn N."/>
            <person name="Harris B."/>
            <person name="Ansorge W."/>
            <person name="Brandt P."/>
            <person name="Grivell L.A."/>
            <person name="Rieger M."/>
            <person name="Weichselgartner M."/>
            <person name="de Simone V."/>
            <person name="Obermaier B."/>
            <person name="Mache R."/>
            <person name="Mueller M."/>
            <person name="Kreis M."/>
            <person name="Delseny M."/>
            <person name="Puigdomenech P."/>
            <person name="Watson M."/>
            <person name="Schmidtheini T."/>
            <person name="Reichert B."/>
            <person name="Portetelle D."/>
            <person name="Perez-Alonso M."/>
            <person name="Boutry M."/>
            <person name="Bancroft I."/>
            <person name="Vos P."/>
            <person name="Hoheisel J."/>
            <person name="Zimmermann W."/>
            <person name="Wedler H."/>
            <person name="Ridley P."/>
            <person name="Langham S.-A."/>
            <person name="McCullagh B."/>
            <person name="Bilham L."/>
            <person name="Robben J."/>
            <person name="van der Schueren J."/>
            <person name="Grymonprez B."/>
            <person name="Chuang Y.-J."/>
            <person name="Vandenbussche F."/>
            <person name="Braeken M."/>
            <person name="Weltjens I."/>
            <person name="Voet M."/>
            <person name="Bastiaens I."/>
            <person name="Aert R."/>
            <person name="Defoor E."/>
            <person name="Weitzenegger T."/>
            <person name="Bothe G."/>
            <person name="Ramsperger U."/>
            <person name="Hilbert H."/>
            <person name="Braun M."/>
            <person name="Holzer E."/>
            <person name="Brandt A."/>
            <person name="Peters S."/>
            <person name="van Staveren M."/>
            <person name="Dirkse W."/>
            <person name="Mooijman P."/>
            <person name="Klein Lankhorst R."/>
            <person name="Rose M."/>
            <person name="Hauf J."/>
            <person name="Koetter P."/>
            <person name="Berneiser S."/>
            <person name="Hempel S."/>
            <person name="Feldpausch M."/>
            <person name="Lamberth S."/>
            <person name="Van den Daele H."/>
            <person name="De Keyser A."/>
            <person name="Buysshaert C."/>
            <person name="Gielen J."/>
            <person name="Villarroel R."/>
            <person name="De Clercq R."/>
            <person name="van Montagu M."/>
            <person name="Rogers J."/>
            <person name="Cronin A."/>
            <person name="Quail M.A."/>
            <person name="Bray-Allen S."/>
            <person name="Clark L."/>
            <person name="Doggett J."/>
            <person name="Hall S."/>
            <person name="Kay M."/>
            <person name="Lennard N."/>
            <person name="McLay K."/>
            <person name="Mayes R."/>
            <person name="Pettett A."/>
            <person name="Rajandream M.A."/>
            <person name="Lyne M."/>
            <person name="Benes V."/>
            <person name="Rechmann S."/>
            <person name="Borkova D."/>
            <person name="Bloecker H."/>
            <person name="Scharfe M."/>
            <person name="Grimm M."/>
            <person name="Loehnert T.-H."/>
            <person name="Dose S."/>
            <person name="de Haan M."/>
            <person name="Maarse A.C."/>
            <person name="Schaefer M."/>
            <person name="Mueller-Auer S."/>
            <person name="Gabel C."/>
            <person name="Fuchs M."/>
            <person name="Fartmann B."/>
            <person name="Granderath K."/>
            <person name="Dauner D."/>
            <person name="Herzl A."/>
            <person name="Neumann S."/>
            <person name="Argiriou A."/>
            <person name="Vitale D."/>
            <person name="Liguori R."/>
            <person name="Piravandi E."/>
            <person name="Massenet O."/>
            <person name="Quigley F."/>
            <person name="Clabauld G."/>
            <person name="Muendlein A."/>
            <person name="Felber R."/>
            <person name="Schnabl S."/>
            <person name="Hiller R."/>
            <person name="Schmidt W."/>
            <person name="Lecharny A."/>
            <person name="Aubourg S."/>
            <person name="Chefdor F."/>
            <person name="Cooke R."/>
            <person name="Berger C."/>
            <person name="Monfort A."/>
            <person name="Casacuberta E."/>
            <person name="Gibbons T."/>
            <person name="Weber N."/>
            <person name="Vandenbol M."/>
            <person name="Bargues M."/>
            <person name="Terol J."/>
            <person name="Torres A."/>
            <person name="Perez-Perez A."/>
            <person name="Purnelle B."/>
            <person name="Bent E."/>
            <person name="Johnson S."/>
            <person name="Tacon D."/>
            <person name="Jesse T."/>
            <person name="Heijnen L."/>
            <person name="Schwarz S."/>
            <person name="Scholler P."/>
            <person name="Heber S."/>
            <person name="Francs P."/>
            <person name="Bielke C."/>
            <person name="Frishman D."/>
            <person name="Haase D."/>
            <person name="Lemcke K."/>
            <person name="Mewes H.-W."/>
            <person name="Stocker S."/>
            <person name="Zaccaria P."/>
            <person name="Bevan M."/>
            <person name="Wilson R.K."/>
            <person name="de la Bastide M."/>
            <person name="Habermann K."/>
            <person name="Parnell L."/>
            <person name="Dedhia N."/>
            <person name="Gnoj L."/>
            <person name="Schutz K."/>
            <person name="Huang E."/>
            <person name="Spiegel L."/>
            <person name="Sekhon M."/>
            <person name="Murray J."/>
            <person name="Sheet P."/>
            <person name="Cordes M."/>
            <person name="Abu-Threideh J."/>
            <person name="Stoneking T."/>
            <person name="Kalicki J."/>
            <person name="Graves T."/>
            <person name="Harmon G."/>
            <person name="Edwards J."/>
            <person name="Latreille P."/>
            <person name="Courtney L."/>
            <person name="Cloud J."/>
            <person name="Abbott A."/>
            <person name="Scott K."/>
            <person name="Johnson D."/>
            <person name="Minx P."/>
            <person name="Bentley D."/>
            <person name="Fulton B."/>
            <person name="Miller N."/>
            <person name="Greco T."/>
            <person name="Kemp K."/>
            <person name="Kramer J."/>
            <person name="Fulton L."/>
            <person name="Mardis E."/>
            <person name="Dante M."/>
            <person name="Pepin K."/>
            <person name="Hillier L.W."/>
            <person name="Nelson J."/>
            <person name="Spieth J."/>
            <person name="Ryan E."/>
            <person name="Andrews S."/>
            <person name="Geisel C."/>
            <person name="Layman D."/>
            <person name="Du H."/>
            <person name="Ali J."/>
            <person name="Berghoff A."/>
            <person name="Jones K."/>
            <person name="Drone K."/>
            <person name="Cotton M."/>
            <person name="Joshu C."/>
            <person name="Antonoiu B."/>
            <person name="Zidanic M."/>
            <person name="Strong C."/>
            <person name="Sun H."/>
            <person name="Lamar B."/>
            <person name="Yordan C."/>
            <person name="Ma P."/>
            <person name="Zhong J."/>
            <person name="Preston R."/>
            <person name="Vil D."/>
            <person name="Shekher M."/>
            <person name="Matero A."/>
            <person name="Shah R."/>
            <person name="Swaby I.K."/>
            <person name="O'Shaughnessy A."/>
            <person name="Rodriguez M."/>
            <person name="Hoffman J."/>
            <person name="Till S."/>
            <person name="Granat S."/>
            <person name="Shohdy N."/>
            <person name="Hasegawa A."/>
            <person name="Hameed A."/>
            <person name="Lodhi M."/>
            <person name="Johnson A."/>
            <person name="Chen E."/>
            <person name="Marra M.A."/>
            <person name="Martienssen R."/>
            <person name="McCombie W.R."/>
        </authorList>
    </citation>
    <scope>NUCLEOTIDE SEQUENCE [LARGE SCALE GENOMIC DNA]</scope>
    <source>
        <strain>cv. Columbia</strain>
    </source>
</reference>
<reference key="2">
    <citation type="journal article" date="2017" name="Plant J.">
        <title>Araport11: a complete reannotation of the Arabidopsis thaliana reference genome.</title>
        <authorList>
            <person name="Cheng C.Y."/>
            <person name="Krishnakumar V."/>
            <person name="Chan A.P."/>
            <person name="Thibaud-Nissen F."/>
            <person name="Schobel S."/>
            <person name="Town C.D."/>
        </authorList>
    </citation>
    <scope>GENOME REANNOTATION</scope>
    <source>
        <strain>cv. Columbia</strain>
    </source>
</reference>
<reference key="3">
    <citation type="journal article" date="2004" name="Genome Res.">
        <title>Whole genome sequence comparisons and 'full-length' cDNA sequences: a combined approach to evaluate and improve Arabidopsis genome annotation.</title>
        <authorList>
            <person name="Castelli V."/>
            <person name="Aury J.-M."/>
            <person name="Jaillon O."/>
            <person name="Wincker P."/>
            <person name="Clepet C."/>
            <person name="Menard M."/>
            <person name="Cruaud C."/>
            <person name="Quetier F."/>
            <person name="Scarpelli C."/>
            <person name="Schaechter V."/>
            <person name="Temple G."/>
            <person name="Caboche M."/>
            <person name="Weissenbach J."/>
            <person name="Salanoubat M."/>
        </authorList>
    </citation>
    <scope>NUCLEOTIDE SEQUENCE [LARGE SCALE MRNA]</scope>
    <source>
        <strain>cv. Columbia</strain>
    </source>
</reference>
<reference key="4">
    <citation type="submission" date="2006-07" db="EMBL/GenBank/DDBJ databases">
        <title>Large-scale analysis of RIKEN Arabidopsis full-length (RAFL) cDNAs.</title>
        <authorList>
            <person name="Totoki Y."/>
            <person name="Seki M."/>
            <person name="Ishida J."/>
            <person name="Nakajima M."/>
            <person name="Enju A."/>
            <person name="Kamiya A."/>
            <person name="Narusaka M."/>
            <person name="Shin-i T."/>
            <person name="Nakagawa M."/>
            <person name="Sakamoto N."/>
            <person name="Oishi K."/>
            <person name="Kohara Y."/>
            <person name="Kobayashi M."/>
            <person name="Toyoda A."/>
            <person name="Sakaki Y."/>
            <person name="Sakurai T."/>
            <person name="Iida K."/>
            <person name="Akiyama K."/>
            <person name="Satou M."/>
            <person name="Toyoda T."/>
            <person name="Konagaya A."/>
            <person name="Carninci P."/>
            <person name="Kawai J."/>
            <person name="Hayashizaki Y."/>
            <person name="Shinozaki K."/>
        </authorList>
    </citation>
    <scope>NUCLEOTIDE SEQUENCE [LARGE SCALE MRNA] OF 17-217</scope>
    <source>
        <strain>cv. Columbia</strain>
    </source>
</reference>
<reference key="5">
    <citation type="journal article" date="2005" name="Plant Cell">
        <title>New subunits NDH-M, -N, and -O, encoded by nuclear genes, are essential for plastid Ndh complex functioning in higher plants.</title>
        <authorList>
            <person name="Rumeau D."/>
            <person name="Becuwe-Linka N."/>
            <person name="Beyly A."/>
            <person name="Louwagie M."/>
            <person name="Garin J."/>
            <person name="Peltier G."/>
        </authorList>
    </citation>
    <scope>COMPONENT OF THE NDH COMPLEX</scope>
    <scope>DISRUPTION PHENOTYPE</scope>
</reference>
<reference key="6">
    <citation type="journal article" date="2009" name="Mol. Plant">
        <title>Towards characterization of the chloroplast NAD(P)H dehydrogenase complex.</title>
        <authorList>
            <person name="Suorsa M."/>
            <person name="Sirpioe S."/>
            <person name="Aro E.M."/>
        </authorList>
    </citation>
    <scope>REVIEW</scope>
</reference>
<reference key="7">
    <citation type="journal article" date="2011" name="Biochim. Biophys. Acta">
        <title>Structure and biogenesis of the chloroplast NAD(P)H dehydrogenase complex.</title>
        <authorList>
            <person name="Peng L."/>
            <person name="Yamamoto H."/>
            <person name="Shikanai T."/>
        </authorList>
    </citation>
    <scope>REVIEW</scope>
</reference>
<reference key="8">
    <citation type="journal article" date="2011" name="Plant Cell Physiol.">
        <title>Structure of the chloroplast NADH dehydrogenase-like complex: nomenclature for nuclear-encoded subunits.</title>
        <authorList>
            <person name="Ifuku K."/>
            <person name="Endo T."/>
            <person name="Shikanai T."/>
            <person name="Aro E.M."/>
        </authorList>
    </citation>
    <scope>NOMENCLATURE</scope>
    <scope>COMPONENT OF THE NDH COMPLEX</scope>
</reference>
<protein>
    <recommendedName>
        <fullName evidence="8">NAD(P)H-quinone oxidoreductase subunit M, chloroplastic</fullName>
        <ecNumber evidence="8">7.1.1.-</ecNumber>
    </recommendedName>
    <alternativeName>
        <fullName evidence="7">NAD(P)H dehydrogenase subunit M</fullName>
        <shortName evidence="8">NDH subunit M</shortName>
        <shortName evidence="6">NDH-M</shortName>
    </alternativeName>
    <alternativeName>
        <fullName evidence="8">NADH-plastoquinone oxidoreductase subunit M</fullName>
    </alternativeName>
</protein>
<feature type="transit peptide" description="Chloroplast" evidence="2">
    <location>
        <begin position="1"/>
        <end position="21"/>
    </location>
</feature>
<feature type="chain" id="PRO_0000352661" description="NAD(P)H-quinone oxidoreductase subunit M, chloroplastic">
    <location>
        <begin position="22"/>
        <end position="217"/>
    </location>
</feature>
<feature type="region of interest" description="Disordered" evidence="3">
    <location>
        <begin position="48"/>
        <end position="67"/>
    </location>
</feature>
<feature type="compositionally biased region" description="Basic and acidic residues" evidence="3">
    <location>
        <begin position="50"/>
        <end position="62"/>
    </location>
</feature>
<feature type="sequence conflict" description="In Ref. 4; BAE99184." evidence="8" ref="4">
    <original>H</original>
    <variation>D</variation>
    <location>
        <position position="17"/>
    </location>
</feature>
<dbReference type="EC" id="7.1.1.-" evidence="8"/>
<dbReference type="EMBL" id="AL035538">
    <property type="protein sequence ID" value="CAB37532.1"/>
    <property type="status" value="ALT_SEQ"/>
    <property type="molecule type" value="Genomic_DNA"/>
</dbReference>
<dbReference type="EMBL" id="AL161592">
    <property type="protein sequence ID" value="CAB80457.1"/>
    <property type="status" value="ALT_SEQ"/>
    <property type="molecule type" value="Genomic_DNA"/>
</dbReference>
<dbReference type="EMBL" id="CP002687">
    <property type="protein sequence ID" value="AEE86854.1"/>
    <property type="molecule type" value="Genomic_DNA"/>
</dbReference>
<dbReference type="EMBL" id="BX829112">
    <property type="status" value="NOT_ANNOTATED_CDS"/>
    <property type="molecule type" value="mRNA"/>
</dbReference>
<dbReference type="EMBL" id="AK227138">
    <property type="protein sequence ID" value="BAE99184.1"/>
    <property type="molecule type" value="mRNA"/>
</dbReference>
<dbReference type="PIR" id="T05619">
    <property type="entry name" value="T05619"/>
</dbReference>
<dbReference type="RefSeq" id="NP_001031804.1">
    <property type="nucleotide sequence ID" value="NM_001036727.3"/>
</dbReference>
<dbReference type="PDB" id="7WFG">
    <property type="method" value="EM"/>
    <property type="resolution" value="4.33 A"/>
    <property type="chains" value="M=1-217"/>
</dbReference>
<dbReference type="PDB" id="7WG5">
    <property type="method" value="EM"/>
    <property type="resolution" value="3.89 A"/>
    <property type="chains" value="M=1-217"/>
</dbReference>
<dbReference type="PDBsum" id="7WFG"/>
<dbReference type="PDBsum" id="7WG5"/>
<dbReference type="EMDB" id="EMD-32465"/>
<dbReference type="EMDB" id="EMD-32477"/>
<dbReference type="SMR" id="Q2V2S7"/>
<dbReference type="BioGRID" id="530952">
    <property type="interactions" value="3"/>
</dbReference>
<dbReference type="FunCoup" id="Q2V2S7">
    <property type="interactions" value="1012"/>
</dbReference>
<dbReference type="STRING" id="3702.Q2V2S7"/>
<dbReference type="TCDB" id="3.D.1.8.1">
    <property type="family name" value="the h+ or na+-translocating nadh dehydrogenase (ndh) family"/>
</dbReference>
<dbReference type="PaxDb" id="3702-AT4G37925.1"/>
<dbReference type="ProteomicsDB" id="251321"/>
<dbReference type="EnsemblPlants" id="AT4G37925.1">
    <property type="protein sequence ID" value="AT4G37925.1"/>
    <property type="gene ID" value="AT4G37925"/>
</dbReference>
<dbReference type="GeneID" id="3770591"/>
<dbReference type="Gramene" id="AT4G37925.1">
    <property type="protein sequence ID" value="AT4G37925.1"/>
    <property type="gene ID" value="AT4G37925"/>
</dbReference>
<dbReference type="KEGG" id="ath:AT4G37925"/>
<dbReference type="Araport" id="AT4G37925"/>
<dbReference type="TAIR" id="AT4G37925">
    <property type="gene designation" value="NDHM"/>
</dbReference>
<dbReference type="eggNOG" id="ENOG502QUN1">
    <property type="taxonomic scope" value="Eukaryota"/>
</dbReference>
<dbReference type="HOGENOM" id="CLU_089187_0_0_1"/>
<dbReference type="InParanoid" id="Q2V2S7"/>
<dbReference type="OMA" id="YMASTHF"/>
<dbReference type="OrthoDB" id="2013483at2759"/>
<dbReference type="PhylomeDB" id="Q2V2S7"/>
<dbReference type="PRO" id="PR:Q2V2S7"/>
<dbReference type="Proteomes" id="UP000006548">
    <property type="component" value="Chromosome 4"/>
</dbReference>
<dbReference type="ExpressionAtlas" id="Q2V2S7">
    <property type="expression patterns" value="baseline and differential"/>
</dbReference>
<dbReference type="GO" id="GO:0009507">
    <property type="term" value="C:chloroplast"/>
    <property type="evidence" value="ECO:0007005"/>
    <property type="project" value="TAIR"/>
</dbReference>
<dbReference type="GO" id="GO:0009535">
    <property type="term" value="C:chloroplast thylakoid membrane"/>
    <property type="evidence" value="ECO:0000304"/>
    <property type="project" value="TAIR"/>
</dbReference>
<dbReference type="GO" id="GO:0010598">
    <property type="term" value="C:NAD(P)H dehydrogenase complex (plastoquinone)"/>
    <property type="evidence" value="ECO:0000304"/>
    <property type="project" value="TAIR"/>
</dbReference>
<dbReference type="GO" id="GO:0005886">
    <property type="term" value="C:plasma membrane"/>
    <property type="evidence" value="ECO:0007005"/>
    <property type="project" value="TAIR"/>
</dbReference>
<dbReference type="GO" id="GO:0016655">
    <property type="term" value="F:oxidoreductase activity, acting on NAD(P)H, quinone or similar compound as acceptor"/>
    <property type="evidence" value="ECO:0007669"/>
    <property type="project" value="InterPro"/>
</dbReference>
<dbReference type="GO" id="GO:0048038">
    <property type="term" value="F:quinone binding"/>
    <property type="evidence" value="ECO:0007669"/>
    <property type="project" value="UniProtKB-KW"/>
</dbReference>
<dbReference type="GO" id="GO:0010258">
    <property type="term" value="P:NADH dehydrogenase complex (plastoquinone) assembly"/>
    <property type="evidence" value="ECO:0000315"/>
    <property type="project" value="TAIR"/>
</dbReference>
<dbReference type="InterPro" id="IPR018922">
    <property type="entry name" value="NdhM"/>
</dbReference>
<dbReference type="PANTHER" id="PTHR36900">
    <property type="entry name" value="NAD(P)H-QUINONE OXIDOREDUCTASE SUBUNIT M, CHLOROPLASTIC"/>
    <property type="match status" value="1"/>
</dbReference>
<dbReference type="PANTHER" id="PTHR36900:SF1">
    <property type="entry name" value="NAD(P)H-QUINONE OXIDOREDUCTASE SUBUNIT M, CHLOROPLASTIC"/>
    <property type="match status" value="1"/>
</dbReference>
<dbReference type="Pfam" id="PF10664">
    <property type="entry name" value="NdhM"/>
    <property type="match status" value="1"/>
</dbReference>